<reference key="1">
    <citation type="journal article" date="2009" name="Genome Res.">
        <title>Newly introduced genomic prophage islands are critical determinants of in vivo competitiveness in the Liverpool epidemic strain of Pseudomonas aeruginosa.</title>
        <authorList>
            <person name="Winstanley C."/>
            <person name="Langille M.G.I."/>
            <person name="Fothergill J.L."/>
            <person name="Kukavica-Ibrulj I."/>
            <person name="Paradis-Bleau C."/>
            <person name="Sanschagrin F."/>
            <person name="Thomson N.R."/>
            <person name="Winsor G.L."/>
            <person name="Quail M.A."/>
            <person name="Lennard N."/>
            <person name="Bignell A."/>
            <person name="Clarke L."/>
            <person name="Seeger K."/>
            <person name="Saunders D."/>
            <person name="Harris D."/>
            <person name="Parkhill J."/>
            <person name="Hancock R.E.W."/>
            <person name="Brinkman F.S.L."/>
            <person name="Levesque R.C."/>
        </authorList>
    </citation>
    <scope>NUCLEOTIDE SEQUENCE [LARGE SCALE GENOMIC DNA]</scope>
    <source>
        <strain>LESB58</strain>
    </source>
</reference>
<protein>
    <recommendedName>
        <fullName evidence="1">Malonate decarboxylase acyl carrier protein</fullName>
    </recommendedName>
    <alternativeName>
        <fullName evidence="1">Malonate decarboxylase subunit delta</fullName>
    </alternativeName>
</protein>
<accession>B7V2C1</accession>
<comment type="function">
    <text evidence="1">Subunit of malonate decarboxylase, it is an acyl carrier protein to which acetyl and malonyl thioester residues are bound via a 2'-(5''-phosphoribosyl)-3'-dephospho-CoA prosthetic group and turn over during the catalytic mechanism.</text>
</comment>
<comment type="subcellular location">
    <subcellularLocation>
        <location evidence="1">Cytoplasm</location>
    </subcellularLocation>
</comment>
<comment type="PTM">
    <text evidence="1">Covalently binds the prosthetic group of malonate decarboxylase.</text>
</comment>
<comment type="similarity">
    <text evidence="1">Belongs to the MdcC family.</text>
</comment>
<keyword id="KW-0963">Cytoplasm</keyword>
<keyword id="KW-0597">Phosphoprotein</keyword>
<evidence type="ECO:0000255" key="1">
    <source>
        <dbReference type="HAMAP-Rule" id="MF_00710"/>
    </source>
</evidence>
<sequence>METLTFEFPAGAPARGRALAGCVGSGDLEVLLEPAAGGALSIQVVTSVNGSGPRWQQLFARVFAAPTAPAASIRIHDFGATPGVVRLRLEQALEEAGHD</sequence>
<dbReference type="EMBL" id="FM209186">
    <property type="protein sequence ID" value="CAW24932.1"/>
    <property type="molecule type" value="Genomic_DNA"/>
</dbReference>
<dbReference type="RefSeq" id="WP_012613464.1">
    <property type="nucleotide sequence ID" value="NC_011770.1"/>
</dbReference>
<dbReference type="SMR" id="B7V2C1"/>
<dbReference type="KEGG" id="pag:PLES_02051"/>
<dbReference type="HOGENOM" id="CLU_173135_1_0_6"/>
<dbReference type="GO" id="GO:0005737">
    <property type="term" value="C:cytoplasm"/>
    <property type="evidence" value="ECO:0007669"/>
    <property type="project" value="UniProtKB-SubCell"/>
</dbReference>
<dbReference type="GO" id="GO:0000036">
    <property type="term" value="F:acyl carrier activity"/>
    <property type="evidence" value="ECO:0007669"/>
    <property type="project" value="UniProtKB-UniRule"/>
</dbReference>
<dbReference type="HAMAP" id="MF_00710">
    <property type="entry name" value="Malonate_deCO2ase_dsu"/>
    <property type="match status" value="1"/>
</dbReference>
<dbReference type="InterPro" id="IPR023439">
    <property type="entry name" value="Mal_deCO2ase/Cit_lyase_ACP"/>
</dbReference>
<dbReference type="InterPro" id="IPR009662">
    <property type="entry name" value="Malonate_deCO2ase_dsu"/>
</dbReference>
<dbReference type="NCBIfam" id="TIGR03130">
    <property type="entry name" value="malonate_delta"/>
    <property type="match status" value="1"/>
</dbReference>
<dbReference type="NCBIfam" id="NF002293">
    <property type="entry name" value="PRK01220.1"/>
    <property type="match status" value="1"/>
</dbReference>
<dbReference type="Pfam" id="PF06857">
    <property type="entry name" value="ACP"/>
    <property type="match status" value="1"/>
</dbReference>
<proteinExistence type="inferred from homology"/>
<feature type="chain" id="PRO_1000191173" description="Malonate decarboxylase acyl carrier protein">
    <location>
        <begin position="1"/>
        <end position="99"/>
    </location>
</feature>
<feature type="modified residue" description="O-(phosphoribosyl dephospho-coenzyme A)serine" evidence="1">
    <location>
        <position position="25"/>
    </location>
</feature>
<name>MDCC_PSEA8</name>
<organism>
    <name type="scientific">Pseudomonas aeruginosa (strain LESB58)</name>
    <dbReference type="NCBI Taxonomy" id="557722"/>
    <lineage>
        <taxon>Bacteria</taxon>
        <taxon>Pseudomonadati</taxon>
        <taxon>Pseudomonadota</taxon>
        <taxon>Gammaproteobacteria</taxon>
        <taxon>Pseudomonadales</taxon>
        <taxon>Pseudomonadaceae</taxon>
        <taxon>Pseudomonas</taxon>
    </lineage>
</organism>
<gene>
    <name evidence="1" type="primary">mdcC</name>
    <name type="ordered locus">PLES_02051</name>
</gene>